<proteinExistence type="inferred from homology"/>
<name>TYEA_YEREN</name>
<accession>P69967</accession>
<accession>P16161</accession>
<accession>Q663K2</accession>
<reference key="1">
    <citation type="journal article" date="1998" name="EMBO J.">
        <title>TyeA, a protein involved in control of Yop release and in translocation of Yersinia Yop effectors.</title>
        <authorList>
            <person name="Iriarte M."/>
            <person name="Sory M.P."/>
            <person name="Boland A."/>
            <person name="Boyd A.P."/>
            <person name="Mills S.D."/>
            <person name="Lambermont I."/>
            <person name="Cornelis G.R."/>
        </authorList>
    </citation>
    <scope>NUCLEOTIDE SEQUENCE [GENOMIC DNA]</scope>
    <source>
        <strain>W22703 / Serotype O:9 / Biotype 2</strain>
        <plasmid>pYVe227</plasmid>
    </source>
</reference>
<reference key="2">
    <citation type="journal article" date="1990" name="J. Bacteriol.">
        <title>The lcrE gene is part of an operon in the lcr region of Yersinia enterocolitica O:3.</title>
        <authorList>
            <person name="Viitanen A.-M."/>
            <person name="Toivanen P."/>
            <person name="Skurnik M."/>
        </authorList>
    </citation>
    <scope>NUCLEOTIDE SEQUENCE [GENOMIC DNA]</scope>
    <source>
        <strain>Serotype O:3</strain>
        <plasmid>pYV</plasmid>
    </source>
</reference>
<gene>
    <name type="primary">tyeA</name>
</gene>
<feature type="chain" id="PRO_0000065702" description="Protein TyeA">
    <location>
        <begin position="1"/>
        <end position="92"/>
    </location>
</feature>
<organism>
    <name type="scientific">Yersinia enterocolitica</name>
    <dbReference type="NCBI Taxonomy" id="630"/>
    <lineage>
        <taxon>Bacteria</taxon>
        <taxon>Pseudomonadati</taxon>
        <taxon>Pseudomonadota</taxon>
        <taxon>Gammaproteobacteria</taxon>
        <taxon>Enterobacterales</taxon>
        <taxon>Yersiniaceae</taxon>
        <taxon>Yersinia</taxon>
    </lineage>
</organism>
<protein>
    <recommendedName>
        <fullName>Protein TyeA</fullName>
    </recommendedName>
</protein>
<sequence length="92" mass="10753">MAYDLSEFMGDIVALVDKRWAGIHDIEHLANAFSLPTPEIKVRFYQDLKRMFRLFPLGVFSDEEQRQNLLQMCQNAIDMAIESEEEELSELD</sequence>
<comment type="function">
    <text>Involved in the control of Yop release.</text>
</comment>
<comment type="subunit">
    <text>Interacts with the translocator YopD and with residues 242-293 of YopN.</text>
</comment>
<comment type="similarity">
    <text evidence="1">Belongs to the TyeA family.</text>
</comment>
<evidence type="ECO:0000305" key="1"/>
<dbReference type="EMBL" id="AF102990">
    <property type="protein sequence ID" value="AAD16822.1"/>
    <property type="molecule type" value="Genomic_DNA"/>
</dbReference>
<dbReference type="EMBL" id="M32097">
    <property type="protein sequence ID" value="AAA98430.1"/>
    <property type="molecule type" value="Genomic_DNA"/>
</dbReference>
<dbReference type="PIR" id="B35392">
    <property type="entry name" value="B35392"/>
</dbReference>
<dbReference type="RefSeq" id="NP_052399.1">
    <property type="nucleotide sequence ID" value="NC_002120.1"/>
</dbReference>
<dbReference type="RefSeq" id="NP_783673.1">
    <property type="nucleotide sequence ID" value="NC_004564.1"/>
</dbReference>
<dbReference type="RefSeq" id="NP_863521.1">
    <property type="nucleotide sequence ID" value="NC_005017.1"/>
</dbReference>
<dbReference type="RefSeq" id="WP_002212965.1">
    <property type="nucleotide sequence ID" value="NZ_NWMR01000033.1"/>
</dbReference>
<dbReference type="SMR" id="P69967"/>
<dbReference type="GeneID" id="31412300"/>
<dbReference type="OMA" id="NAMELTA"/>
<dbReference type="Gene3D" id="1.20.1280.80">
    <property type="match status" value="1"/>
</dbReference>
<dbReference type="InterPro" id="IPR015144">
    <property type="entry name" value="T3SS_TyeA"/>
</dbReference>
<dbReference type="InterPro" id="IPR013351">
    <property type="entry name" value="T3SS_TyeA-rel"/>
</dbReference>
<dbReference type="InterPro" id="IPR038347">
    <property type="entry name" value="TyeA_sf"/>
</dbReference>
<dbReference type="NCBIfam" id="TIGR02511">
    <property type="entry name" value="type_III_tyeA"/>
    <property type="match status" value="1"/>
</dbReference>
<dbReference type="Pfam" id="PF09059">
    <property type="entry name" value="TyeA"/>
    <property type="match status" value="1"/>
</dbReference>
<dbReference type="SUPFAM" id="SSF140591">
    <property type="entry name" value="Type III secretion system domain"/>
    <property type="match status" value="1"/>
</dbReference>
<keyword id="KW-0614">Plasmid</keyword>
<geneLocation type="plasmid">
    <name>pYV</name>
</geneLocation>
<geneLocation type="plasmid">
    <name>pYVe227</name>
</geneLocation>